<sequence length="270" mass="28179">MANNSVMMKKKLEGKVAIVTGGASGIGEATARLFVKYGARAVVIADIQSELGRSVAESIGKERCSFVQCDVADEEQVKSMIEWTATTYGGLDVMFSNAGVLNSAAQTVKDLDLPLFDKVMRVNTRGAAVCVKQAARKMVELGRGGSIICNAGSSAVRGAHGVTDYVMSKHAVIGLVRSASMQLGAHSIRVNSVSPMAVATPLTRNQGISTPDDVQKFLMPFISLKGVPPTAEQVAEAAAFLGSDEAAFVTGHDLPVDGGVLCMPFLLGSA</sequence>
<evidence type="ECO:0000269" key="1">
    <source>
    </source>
</evidence>
<evidence type="ECO:0000269" key="2">
    <source>
    </source>
</evidence>
<evidence type="ECO:0000303" key="3">
    <source>
    </source>
</evidence>
<evidence type="ECO:0000305" key="4"/>
<evidence type="ECO:0007744" key="5">
    <source>
        <dbReference type="PDB" id="6F9Q"/>
    </source>
</evidence>
<evidence type="ECO:0007829" key="6">
    <source>
        <dbReference type="PDB" id="6F9Q"/>
    </source>
</evidence>
<proteinExistence type="evidence at protein level"/>
<name>NEPS3_NEPRA</name>
<comment type="function">
    <text evidence="1 2">Functions as a non-oxidoreductive cyclase to promote the formation of cis-cis-nepetalactol (PubMed:30531909, PubMed:30664302). Cis-cis-nepetalactol is then oxidized by NEPS1 into cis-cis-nepetalactone, which belongs to a family of metabolites that are both insect-repellent and have euphoric effect in cats (PubMed:30531909, PubMed:30664302). Binds NAD(+) as classical short-chain dehydrogenase/reductase (SDR), but does not utilize it for its redox-neutral cyclase activity (PubMed:30531909, PubMed:30664302).</text>
</comment>
<comment type="catalytic activity">
    <reaction evidence="1 2">
        <text>(S)-8-oxocitronellyl enol = cis-cis-nepetalactol</text>
        <dbReference type="Rhea" id="RHEA:61420"/>
        <dbReference type="ChEBI" id="CHEBI:144481"/>
        <dbReference type="ChEBI" id="CHEBI:144485"/>
        <dbReference type="EC" id="5.5.1.35"/>
    </reaction>
    <physiologicalReaction direction="left-to-right" evidence="1 2">
        <dbReference type="Rhea" id="RHEA:61421"/>
    </physiologicalReaction>
</comment>
<comment type="subunit">
    <text evidence="1">Forms homotetramers.</text>
</comment>
<comment type="similarity">
    <text evidence="4">Belongs to the short-chain dehydrogenases/reductases (SDR) family.</text>
</comment>
<gene>
    <name evidence="3" type="primary">NEPS3</name>
</gene>
<keyword id="KW-0002">3D-structure</keyword>
<keyword id="KW-0413">Isomerase</keyword>
<keyword id="KW-0520">NAD</keyword>
<feature type="chain" id="PRO_0000449833" description="(+)-cis,cis-nepetalactol synthase NEPS3">
    <location>
        <begin position="1"/>
        <end position="270"/>
    </location>
</feature>
<feature type="binding site" evidence="1 5">
    <location>
        <begin position="21"/>
        <end position="27"/>
    </location>
    <ligand>
        <name>NAD(+)</name>
        <dbReference type="ChEBI" id="CHEBI:57540"/>
    </ligand>
</feature>
<feature type="binding site" evidence="1 5">
    <location>
        <begin position="46"/>
        <end position="48"/>
    </location>
    <ligand>
        <name>NAD(+)</name>
        <dbReference type="ChEBI" id="CHEBI:57540"/>
    </ligand>
</feature>
<feature type="binding site" evidence="1 5">
    <location>
        <begin position="70"/>
        <end position="71"/>
    </location>
    <ligand>
        <name>NAD(+)</name>
        <dbReference type="ChEBI" id="CHEBI:57540"/>
    </ligand>
</feature>
<feature type="binding site" evidence="1 5">
    <location>
        <position position="97"/>
    </location>
    <ligand>
        <name>NAD(+)</name>
        <dbReference type="ChEBI" id="CHEBI:57540"/>
    </ligand>
</feature>
<feature type="binding site" evidence="1 5">
    <location>
        <begin position="165"/>
        <end position="169"/>
    </location>
    <ligand>
        <name>NAD(+)</name>
        <dbReference type="ChEBI" id="CHEBI:57540"/>
    </ligand>
</feature>
<feature type="binding site" evidence="1 5">
    <location>
        <begin position="198"/>
        <end position="202"/>
    </location>
    <ligand>
        <name>NAD(+)</name>
        <dbReference type="ChEBI" id="CHEBI:57540"/>
    </ligand>
</feature>
<feature type="mutagenesis site" description="No effect on catalytic activity." evidence="1">
    <original>N</original>
    <variation>T</variation>
    <location>
        <position position="150"/>
    </location>
</feature>
<feature type="mutagenesis site" description="Abolishes catalytic activity." evidence="1">
    <original>S</original>
    <variation>L</variation>
    <location>
        <position position="154"/>
    </location>
</feature>
<feature type="mutagenesis site" description="Abolishes catalytic activity." evidence="1">
    <original>K</original>
    <variation>M</variation>
    <location>
        <position position="169"/>
    </location>
</feature>
<feature type="mutagenesis site" description="Abolishes catalytic activity." evidence="1">
    <original>M</original>
    <variation>S</variation>
    <location>
        <position position="196"/>
    </location>
</feature>
<feature type="turn" evidence="6">
    <location>
        <begin position="11"/>
        <end position="14"/>
    </location>
</feature>
<feature type="strand" evidence="6">
    <location>
        <begin position="16"/>
        <end position="20"/>
    </location>
</feature>
<feature type="turn" evidence="6">
    <location>
        <begin position="21"/>
        <end position="23"/>
    </location>
</feature>
<feature type="helix" evidence="6">
    <location>
        <begin position="25"/>
        <end position="36"/>
    </location>
</feature>
<feature type="strand" evidence="6">
    <location>
        <begin position="40"/>
        <end position="47"/>
    </location>
</feature>
<feature type="helix" evidence="6">
    <location>
        <begin position="49"/>
        <end position="59"/>
    </location>
</feature>
<feature type="turn" evidence="6">
    <location>
        <begin position="61"/>
        <end position="63"/>
    </location>
</feature>
<feature type="strand" evidence="6">
    <location>
        <begin position="64"/>
        <end position="68"/>
    </location>
</feature>
<feature type="helix" evidence="6">
    <location>
        <begin position="74"/>
        <end position="88"/>
    </location>
</feature>
<feature type="strand" evidence="6">
    <location>
        <begin position="93"/>
        <end position="96"/>
    </location>
</feature>
<feature type="helix" evidence="6">
    <location>
        <begin position="113"/>
        <end position="123"/>
    </location>
</feature>
<feature type="helix" evidence="6">
    <location>
        <begin position="125"/>
        <end position="141"/>
    </location>
</feature>
<feature type="strand" evidence="6">
    <location>
        <begin position="145"/>
        <end position="150"/>
    </location>
</feature>
<feature type="helix" evidence="6">
    <location>
        <begin position="153"/>
        <end position="155"/>
    </location>
</feature>
<feature type="helix" evidence="6">
    <location>
        <begin position="163"/>
        <end position="183"/>
    </location>
</feature>
<feature type="helix" evidence="6">
    <location>
        <begin position="184"/>
        <end position="186"/>
    </location>
</feature>
<feature type="strand" evidence="6">
    <location>
        <begin position="188"/>
        <end position="195"/>
    </location>
</feature>
<feature type="helix" evidence="6">
    <location>
        <begin position="201"/>
        <end position="204"/>
    </location>
</feature>
<feature type="turn" evidence="6">
    <location>
        <begin position="205"/>
        <end position="207"/>
    </location>
</feature>
<feature type="helix" evidence="6">
    <location>
        <begin position="211"/>
        <end position="217"/>
    </location>
</feature>
<feature type="helix" evidence="6">
    <location>
        <begin position="219"/>
        <end position="221"/>
    </location>
</feature>
<feature type="helix" evidence="6">
    <location>
        <begin position="231"/>
        <end position="242"/>
    </location>
</feature>
<feature type="helix" evidence="6">
    <location>
        <begin position="244"/>
        <end position="246"/>
    </location>
</feature>
<feature type="strand" evidence="6">
    <location>
        <begin position="253"/>
        <end position="258"/>
    </location>
</feature>
<feature type="strand" evidence="6">
    <location>
        <begin position="260"/>
        <end position="262"/>
    </location>
</feature>
<protein>
    <recommendedName>
        <fullName evidence="4">(+)-cis,cis-nepetalactol synthase NEPS3</fullName>
        <ecNumber evidence="1 2">5.5.1.35</ecNumber>
    </recommendedName>
    <alternativeName>
        <fullName evidence="3">Nepetalactol-related short-chain reductase 3</fullName>
        <shortName evidence="3">NmNEPS3</shortName>
    </alternativeName>
</protein>
<organism>
    <name type="scientific">Nepeta racemosa</name>
    <name type="common">Catmint</name>
    <name type="synonym">Raceme catnip</name>
    <dbReference type="NCBI Taxonomy" id="54731"/>
    <lineage>
        <taxon>Eukaryota</taxon>
        <taxon>Viridiplantae</taxon>
        <taxon>Streptophyta</taxon>
        <taxon>Embryophyta</taxon>
        <taxon>Tracheophyta</taxon>
        <taxon>Spermatophyta</taxon>
        <taxon>Magnoliopsida</taxon>
        <taxon>eudicotyledons</taxon>
        <taxon>Gunneridae</taxon>
        <taxon>Pentapetalae</taxon>
        <taxon>asterids</taxon>
        <taxon>lamiids</taxon>
        <taxon>Lamiales</taxon>
        <taxon>Lamiaceae</taxon>
        <taxon>Nepetoideae</taxon>
        <taxon>Mentheae</taxon>
        <taxon>Nepetinae</taxon>
        <taxon>Nepeta</taxon>
    </lineage>
</organism>
<reference key="1">
    <citation type="journal article" date="2019" name="Nat. Chem. Biol.">
        <title>Uncoupled activation and cyclization in catmint reductive terpenoid biosynthesis.</title>
        <authorList>
            <person name="Lichman B.R."/>
            <person name="Kamileen M.O."/>
            <person name="Titchiner G.R."/>
            <person name="Saalbach G."/>
            <person name="Stevenson C.E.M."/>
            <person name="Lawson D.M."/>
            <person name="O'Connor S.E."/>
        </authorList>
    </citation>
    <scope>NUCLEOTIDE SEQUENCE [MRNA]</scope>
    <scope>X-RAY CRYSTALLOGRAPHY (1.40 ANGSTROMS) IN COMPLEX WITH NAD</scope>
    <scope>FUNCTION</scope>
    <scope>CATALYTIC ACTIVITY</scope>
    <scope>SUBUNIT</scope>
    <scope>MUTAGENESIS OF ASN-150; SER-154; LYS-169 AND MET-196</scope>
</reference>
<reference key="2">
    <citation type="journal article" date="2019" name="Chemistry">
        <title>Biocatalytic strategies towards [4+2] cycloadditions.</title>
        <authorList>
            <person name="Lichman B.R."/>
            <person name="O'Connor S.E."/>
            <person name="Kries H."/>
        </authorList>
    </citation>
    <scope>FUNCTION</scope>
    <scope>CATALYTIC ACTIVITY</scope>
</reference>
<dbReference type="EC" id="5.5.1.35" evidence="1 2"/>
<dbReference type="EMBL" id="MG677126">
    <property type="protein sequence ID" value="AXF35973.1"/>
    <property type="molecule type" value="mRNA"/>
</dbReference>
<dbReference type="PDB" id="6F9Q">
    <property type="method" value="X-ray"/>
    <property type="resolution" value="1.40 A"/>
    <property type="chains" value="A/B/C/D=1-270"/>
</dbReference>
<dbReference type="PDBsum" id="6F9Q"/>
<dbReference type="SMR" id="A0A3Q8GLE8"/>
<dbReference type="KEGG" id="ag:AXF35973"/>
<dbReference type="BRENDA" id="5.5.1.35">
    <property type="organism ID" value="12895"/>
</dbReference>
<dbReference type="GO" id="GO:0016853">
    <property type="term" value="F:isomerase activity"/>
    <property type="evidence" value="ECO:0007669"/>
    <property type="project" value="UniProtKB-KW"/>
</dbReference>
<dbReference type="FunFam" id="3.40.50.720:FF:000084">
    <property type="entry name" value="Short-chain dehydrogenase reductase"/>
    <property type="match status" value="1"/>
</dbReference>
<dbReference type="Gene3D" id="3.40.50.720">
    <property type="entry name" value="NAD(P)-binding Rossmann-like Domain"/>
    <property type="match status" value="1"/>
</dbReference>
<dbReference type="InterPro" id="IPR036291">
    <property type="entry name" value="NAD(P)-bd_dom_sf"/>
</dbReference>
<dbReference type="InterPro" id="IPR002347">
    <property type="entry name" value="SDR_fam"/>
</dbReference>
<dbReference type="PANTHER" id="PTHR42820">
    <property type="entry name" value="SHORT-CHAIN DEHYDROGENASE REDUCTASE"/>
    <property type="match status" value="1"/>
</dbReference>
<dbReference type="PANTHER" id="PTHR42820:SF21">
    <property type="entry name" value="SHORT-CHAIN DEHYDROGENASE REDUCTASE 3B-LIKE"/>
    <property type="match status" value="1"/>
</dbReference>
<dbReference type="Pfam" id="PF13561">
    <property type="entry name" value="adh_short_C2"/>
    <property type="match status" value="1"/>
</dbReference>
<dbReference type="PRINTS" id="PR00081">
    <property type="entry name" value="GDHRDH"/>
</dbReference>
<dbReference type="SMART" id="SM00822">
    <property type="entry name" value="PKS_KR"/>
    <property type="match status" value="1"/>
</dbReference>
<dbReference type="SUPFAM" id="SSF51735">
    <property type="entry name" value="NAD(P)-binding Rossmann-fold domains"/>
    <property type="match status" value="1"/>
</dbReference>
<accession>A0A3Q8GLE8</accession>
<accession>A0A4P1LYE8</accession>